<sequence length="223" mass="24737">MKAIIPPENLTELLERANMMAGVSLAQIAANRGITVPKNLKRDKGWVGQLIEMELGATAGSKPEQDFLHLGVELKTIPINVQGKPLETTYVCVAPLSQIEGLTWENSLVCHKLQRVLWVPVEGERQISVGARRIGTPILWQPDPDELRLLQQDWEEIMELIALGKVEKLTARHGEVLQLRPKAANSRALTQSIAENGSLKMTNPRGFYLKTAFTAMILNKAFG</sequence>
<proteinExistence type="inferred from homology"/>
<gene>
    <name evidence="1" type="primary">mutH</name>
    <name type="ordered locus">Sputcn32_1141</name>
</gene>
<reference key="1">
    <citation type="submission" date="2007-04" db="EMBL/GenBank/DDBJ databases">
        <title>Complete sequence of Shewanella putrefaciens CN-32.</title>
        <authorList>
            <consortium name="US DOE Joint Genome Institute"/>
            <person name="Copeland A."/>
            <person name="Lucas S."/>
            <person name="Lapidus A."/>
            <person name="Barry K."/>
            <person name="Detter J.C."/>
            <person name="Glavina del Rio T."/>
            <person name="Hammon N."/>
            <person name="Israni S."/>
            <person name="Dalin E."/>
            <person name="Tice H."/>
            <person name="Pitluck S."/>
            <person name="Chain P."/>
            <person name="Malfatti S."/>
            <person name="Shin M."/>
            <person name="Vergez L."/>
            <person name="Schmutz J."/>
            <person name="Larimer F."/>
            <person name="Land M."/>
            <person name="Hauser L."/>
            <person name="Kyrpides N."/>
            <person name="Mikhailova N."/>
            <person name="Romine M.F."/>
            <person name="Fredrickson J."/>
            <person name="Tiedje J."/>
            <person name="Richardson P."/>
        </authorList>
    </citation>
    <scope>NUCLEOTIDE SEQUENCE [LARGE SCALE GENOMIC DNA]</scope>
    <source>
        <strain>CN-32 / ATCC BAA-453</strain>
    </source>
</reference>
<accession>A4Y4I6</accession>
<organism>
    <name type="scientific">Shewanella putrefaciens (strain CN-32 / ATCC BAA-453)</name>
    <dbReference type="NCBI Taxonomy" id="319224"/>
    <lineage>
        <taxon>Bacteria</taxon>
        <taxon>Pseudomonadati</taxon>
        <taxon>Pseudomonadota</taxon>
        <taxon>Gammaproteobacteria</taxon>
        <taxon>Alteromonadales</taxon>
        <taxon>Shewanellaceae</taxon>
        <taxon>Shewanella</taxon>
    </lineage>
</organism>
<keyword id="KW-0963">Cytoplasm</keyword>
<keyword id="KW-0227">DNA damage</keyword>
<keyword id="KW-0234">DNA repair</keyword>
<keyword id="KW-0255">Endonuclease</keyword>
<keyword id="KW-0378">Hydrolase</keyword>
<keyword id="KW-0540">Nuclease</keyword>
<protein>
    <recommendedName>
        <fullName evidence="1">DNA mismatch repair protein MutH</fullName>
    </recommendedName>
    <alternativeName>
        <fullName evidence="1">Methyl-directed mismatch repair protein</fullName>
    </alternativeName>
</protein>
<name>MUTH_SHEPC</name>
<dbReference type="EMBL" id="CP000681">
    <property type="protein sequence ID" value="ABP74869.1"/>
    <property type="molecule type" value="Genomic_DNA"/>
</dbReference>
<dbReference type="SMR" id="A4Y4I6"/>
<dbReference type="STRING" id="319224.Sputcn32_1141"/>
<dbReference type="KEGG" id="spc:Sputcn32_1141"/>
<dbReference type="eggNOG" id="COG3066">
    <property type="taxonomic scope" value="Bacteria"/>
</dbReference>
<dbReference type="HOGENOM" id="CLU_086669_0_0_6"/>
<dbReference type="GO" id="GO:0005737">
    <property type="term" value="C:cytoplasm"/>
    <property type="evidence" value="ECO:0007669"/>
    <property type="project" value="UniProtKB-SubCell"/>
</dbReference>
<dbReference type="GO" id="GO:0003677">
    <property type="term" value="F:DNA binding"/>
    <property type="evidence" value="ECO:0007669"/>
    <property type="project" value="InterPro"/>
</dbReference>
<dbReference type="GO" id="GO:0004519">
    <property type="term" value="F:endonuclease activity"/>
    <property type="evidence" value="ECO:0007669"/>
    <property type="project" value="UniProtKB-UniRule"/>
</dbReference>
<dbReference type="GO" id="GO:0006304">
    <property type="term" value="P:DNA modification"/>
    <property type="evidence" value="ECO:0007669"/>
    <property type="project" value="InterPro"/>
</dbReference>
<dbReference type="GO" id="GO:0006298">
    <property type="term" value="P:mismatch repair"/>
    <property type="evidence" value="ECO:0007669"/>
    <property type="project" value="UniProtKB-UniRule"/>
</dbReference>
<dbReference type="CDD" id="cd00583">
    <property type="entry name" value="MutH-like"/>
    <property type="match status" value="1"/>
</dbReference>
<dbReference type="Gene3D" id="3.40.600.10">
    <property type="entry name" value="DNA mismatch repair MutH/Restriction endonuclease, type II"/>
    <property type="match status" value="1"/>
</dbReference>
<dbReference type="HAMAP" id="MF_00759">
    <property type="entry name" value="MutH"/>
    <property type="match status" value="1"/>
</dbReference>
<dbReference type="InterPro" id="IPR004230">
    <property type="entry name" value="DNA_mismatch_repair_MutH"/>
</dbReference>
<dbReference type="InterPro" id="IPR011337">
    <property type="entry name" value="DNA_rep_MutH/RE_typeII_Sau3AI"/>
</dbReference>
<dbReference type="InterPro" id="IPR037057">
    <property type="entry name" value="DNA_rep_MutH/T2_RE_sf"/>
</dbReference>
<dbReference type="InterPro" id="IPR011335">
    <property type="entry name" value="Restrct_endonuc-II-like"/>
</dbReference>
<dbReference type="NCBIfam" id="TIGR02248">
    <property type="entry name" value="mutH_TIGR"/>
    <property type="match status" value="1"/>
</dbReference>
<dbReference type="NCBIfam" id="NF003458">
    <property type="entry name" value="PRK05070.1"/>
    <property type="match status" value="1"/>
</dbReference>
<dbReference type="Pfam" id="PF02976">
    <property type="entry name" value="MutH"/>
    <property type="match status" value="1"/>
</dbReference>
<dbReference type="SMART" id="SM00927">
    <property type="entry name" value="MutH"/>
    <property type="match status" value="1"/>
</dbReference>
<dbReference type="SUPFAM" id="SSF52980">
    <property type="entry name" value="Restriction endonuclease-like"/>
    <property type="match status" value="1"/>
</dbReference>
<evidence type="ECO:0000255" key="1">
    <source>
        <dbReference type="HAMAP-Rule" id="MF_00759"/>
    </source>
</evidence>
<feature type="chain" id="PRO_1000046708" description="DNA mismatch repair protein MutH">
    <location>
        <begin position="1"/>
        <end position="223"/>
    </location>
</feature>
<comment type="function">
    <text evidence="1">Sequence-specific endonuclease that cleaves unmethylated GATC sequences. It is involved in DNA mismatch repair.</text>
</comment>
<comment type="subcellular location">
    <subcellularLocation>
        <location evidence="1">Cytoplasm</location>
    </subcellularLocation>
</comment>
<comment type="similarity">
    <text evidence="1">Belongs to the MutH family.</text>
</comment>